<protein>
    <recommendedName>
        <fullName evidence="1">Holliday junction branch migration complex subunit RuvA</fullName>
    </recommendedName>
</protein>
<sequence>MIGRLRGTLIEKLPPQILIEVGGIGYEVQMPMSCIYELPNIGEEAIIYTHFVVREDAQLLYGFNTVSERALFREVIKANGVGPKMGLAILSGMTANQFVTCVEKEDISTLIKLPGVGKKTAERLVVEMKDRLKGWGAGDLFTPATDAAPVDSTPVIAQNAQEEAMSALLALGYKPPQASKAVSQVAKAGMSSEELIREALKSMV</sequence>
<gene>
    <name evidence="1" type="primary">ruvA</name>
    <name type="ordered locus">VC0395_A1437</name>
    <name type="ordered locus">VC395_1961</name>
</gene>
<keyword id="KW-0963">Cytoplasm</keyword>
<keyword id="KW-0227">DNA damage</keyword>
<keyword id="KW-0233">DNA recombination</keyword>
<keyword id="KW-0234">DNA repair</keyword>
<keyword id="KW-0238">DNA-binding</keyword>
<reference key="1">
    <citation type="submission" date="2007-03" db="EMBL/GenBank/DDBJ databases">
        <authorList>
            <person name="Heidelberg J."/>
        </authorList>
    </citation>
    <scope>NUCLEOTIDE SEQUENCE [LARGE SCALE GENOMIC DNA]</scope>
    <source>
        <strain>ATCC 39541 / Classical Ogawa 395 / O395</strain>
    </source>
</reference>
<reference key="2">
    <citation type="journal article" date="2008" name="PLoS ONE">
        <title>A recalibrated molecular clock and independent origins for the cholera pandemic clones.</title>
        <authorList>
            <person name="Feng L."/>
            <person name="Reeves P.R."/>
            <person name="Lan R."/>
            <person name="Ren Y."/>
            <person name="Gao C."/>
            <person name="Zhou Z."/>
            <person name="Ren Y."/>
            <person name="Cheng J."/>
            <person name="Wang W."/>
            <person name="Wang J."/>
            <person name="Qian W."/>
            <person name="Li D."/>
            <person name="Wang L."/>
        </authorList>
    </citation>
    <scope>NUCLEOTIDE SEQUENCE [LARGE SCALE GENOMIC DNA]</scope>
    <source>
        <strain>ATCC 39541 / Classical Ogawa 395 / O395</strain>
    </source>
</reference>
<feature type="chain" id="PRO_1000071022" description="Holliday junction branch migration complex subunit RuvA">
    <location>
        <begin position="1"/>
        <end position="204"/>
    </location>
</feature>
<feature type="region of interest" description="Domain I" evidence="1">
    <location>
        <begin position="1"/>
        <end position="64"/>
    </location>
</feature>
<feature type="region of interest" description="Domain II" evidence="1">
    <location>
        <begin position="65"/>
        <end position="143"/>
    </location>
</feature>
<feature type="region of interest" description="Flexible linker" evidence="1">
    <location>
        <begin position="144"/>
        <end position="155"/>
    </location>
</feature>
<feature type="region of interest" description="Domain III" evidence="1">
    <location>
        <begin position="156"/>
        <end position="204"/>
    </location>
</feature>
<accession>A5F761</accession>
<accession>C3M1N8</accession>
<name>RUVA_VIBC3</name>
<comment type="function">
    <text evidence="1">The RuvA-RuvB-RuvC complex processes Holliday junction (HJ) DNA during genetic recombination and DNA repair, while the RuvA-RuvB complex plays an important role in the rescue of blocked DNA replication forks via replication fork reversal (RFR). RuvA specifically binds to HJ cruciform DNA, conferring on it an open structure. The RuvB hexamer acts as an ATP-dependent pump, pulling dsDNA into and through the RuvAB complex. HJ branch migration allows RuvC to scan DNA until it finds its consensus sequence, where it cleaves and resolves the cruciform DNA.</text>
</comment>
<comment type="subunit">
    <text evidence="1">Homotetramer. Forms an RuvA(8)-RuvB(12)-Holliday junction (HJ) complex. HJ DNA is sandwiched between 2 RuvA tetramers; dsDNA enters through RuvA and exits via RuvB. An RuvB hexamer assembles on each DNA strand where it exits the tetramer. Each RuvB hexamer is contacted by two RuvA subunits (via domain III) on 2 adjacent RuvB subunits; this complex drives branch migration. In the full resolvosome a probable DNA-RuvA(4)-RuvB(12)-RuvC(2) complex forms which resolves the HJ.</text>
</comment>
<comment type="subcellular location">
    <subcellularLocation>
        <location evidence="1">Cytoplasm</location>
    </subcellularLocation>
</comment>
<comment type="domain">
    <text evidence="1">Has three domains with a flexible linker between the domains II and III and assumes an 'L' shape. Domain III is highly mobile and contacts RuvB.</text>
</comment>
<comment type="similarity">
    <text evidence="1">Belongs to the RuvA family.</text>
</comment>
<evidence type="ECO:0000255" key="1">
    <source>
        <dbReference type="HAMAP-Rule" id="MF_00031"/>
    </source>
</evidence>
<proteinExistence type="inferred from homology"/>
<organism>
    <name type="scientific">Vibrio cholerae serotype O1 (strain ATCC 39541 / Classical Ogawa 395 / O395)</name>
    <dbReference type="NCBI Taxonomy" id="345073"/>
    <lineage>
        <taxon>Bacteria</taxon>
        <taxon>Pseudomonadati</taxon>
        <taxon>Pseudomonadota</taxon>
        <taxon>Gammaproteobacteria</taxon>
        <taxon>Vibrionales</taxon>
        <taxon>Vibrionaceae</taxon>
        <taxon>Vibrio</taxon>
    </lineage>
</organism>
<dbReference type="EMBL" id="CP000627">
    <property type="protein sequence ID" value="ABQ21653.1"/>
    <property type="molecule type" value="Genomic_DNA"/>
</dbReference>
<dbReference type="EMBL" id="CP001235">
    <property type="protein sequence ID" value="ACP09954.1"/>
    <property type="molecule type" value="Genomic_DNA"/>
</dbReference>
<dbReference type="RefSeq" id="WP_000580359.1">
    <property type="nucleotide sequence ID" value="NZ_JAACZH010000001.1"/>
</dbReference>
<dbReference type="SMR" id="A5F761"/>
<dbReference type="KEGG" id="vco:VC0395_A1437"/>
<dbReference type="KEGG" id="vcr:VC395_1961"/>
<dbReference type="PATRIC" id="fig|345073.21.peg.1893"/>
<dbReference type="eggNOG" id="COG0632">
    <property type="taxonomic scope" value="Bacteria"/>
</dbReference>
<dbReference type="HOGENOM" id="CLU_087936_0_0_6"/>
<dbReference type="OrthoDB" id="5293449at2"/>
<dbReference type="Proteomes" id="UP000000249">
    <property type="component" value="Chromosome 2"/>
</dbReference>
<dbReference type="GO" id="GO:0005737">
    <property type="term" value="C:cytoplasm"/>
    <property type="evidence" value="ECO:0007669"/>
    <property type="project" value="UniProtKB-SubCell"/>
</dbReference>
<dbReference type="GO" id="GO:0009379">
    <property type="term" value="C:Holliday junction helicase complex"/>
    <property type="evidence" value="ECO:0007669"/>
    <property type="project" value="InterPro"/>
</dbReference>
<dbReference type="GO" id="GO:0048476">
    <property type="term" value="C:Holliday junction resolvase complex"/>
    <property type="evidence" value="ECO:0007669"/>
    <property type="project" value="UniProtKB-UniRule"/>
</dbReference>
<dbReference type="GO" id="GO:0005524">
    <property type="term" value="F:ATP binding"/>
    <property type="evidence" value="ECO:0007669"/>
    <property type="project" value="InterPro"/>
</dbReference>
<dbReference type="GO" id="GO:0000400">
    <property type="term" value="F:four-way junction DNA binding"/>
    <property type="evidence" value="ECO:0007669"/>
    <property type="project" value="UniProtKB-UniRule"/>
</dbReference>
<dbReference type="GO" id="GO:0009378">
    <property type="term" value="F:four-way junction helicase activity"/>
    <property type="evidence" value="ECO:0007669"/>
    <property type="project" value="InterPro"/>
</dbReference>
<dbReference type="GO" id="GO:0006310">
    <property type="term" value="P:DNA recombination"/>
    <property type="evidence" value="ECO:0007669"/>
    <property type="project" value="UniProtKB-UniRule"/>
</dbReference>
<dbReference type="GO" id="GO:0006281">
    <property type="term" value="P:DNA repair"/>
    <property type="evidence" value="ECO:0007669"/>
    <property type="project" value="UniProtKB-UniRule"/>
</dbReference>
<dbReference type="CDD" id="cd14332">
    <property type="entry name" value="UBA_RuvA_C"/>
    <property type="match status" value="1"/>
</dbReference>
<dbReference type="FunFam" id="1.10.150.20:FF:000012">
    <property type="entry name" value="Holliday junction ATP-dependent DNA helicase RuvA"/>
    <property type="match status" value="1"/>
</dbReference>
<dbReference type="FunFam" id="2.40.50.140:FF:000083">
    <property type="entry name" value="Holliday junction ATP-dependent DNA helicase RuvA"/>
    <property type="match status" value="1"/>
</dbReference>
<dbReference type="Gene3D" id="1.10.150.20">
    <property type="entry name" value="5' to 3' exonuclease, C-terminal subdomain"/>
    <property type="match status" value="1"/>
</dbReference>
<dbReference type="Gene3D" id="1.10.8.10">
    <property type="entry name" value="DNA helicase RuvA subunit, C-terminal domain"/>
    <property type="match status" value="1"/>
</dbReference>
<dbReference type="Gene3D" id="2.40.50.140">
    <property type="entry name" value="Nucleic acid-binding proteins"/>
    <property type="match status" value="1"/>
</dbReference>
<dbReference type="HAMAP" id="MF_00031">
    <property type="entry name" value="DNA_HJ_migration_RuvA"/>
    <property type="match status" value="1"/>
</dbReference>
<dbReference type="InterPro" id="IPR013849">
    <property type="entry name" value="DNA_helicase_Holl-junc_RuvA_I"/>
</dbReference>
<dbReference type="InterPro" id="IPR003583">
    <property type="entry name" value="Hlx-hairpin-Hlx_DNA-bd_motif"/>
</dbReference>
<dbReference type="InterPro" id="IPR012340">
    <property type="entry name" value="NA-bd_OB-fold"/>
</dbReference>
<dbReference type="InterPro" id="IPR000085">
    <property type="entry name" value="RuvA"/>
</dbReference>
<dbReference type="InterPro" id="IPR010994">
    <property type="entry name" value="RuvA_2-like"/>
</dbReference>
<dbReference type="InterPro" id="IPR011114">
    <property type="entry name" value="RuvA_C"/>
</dbReference>
<dbReference type="InterPro" id="IPR036267">
    <property type="entry name" value="RuvA_C_sf"/>
</dbReference>
<dbReference type="NCBIfam" id="TIGR00084">
    <property type="entry name" value="ruvA"/>
    <property type="match status" value="1"/>
</dbReference>
<dbReference type="Pfam" id="PF14520">
    <property type="entry name" value="HHH_5"/>
    <property type="match status" value="1"/>
</dbReference>
<dbReference type="Pfam" id="PF07499">
    <property type="entry name" value="RuvA_C"/>
    <property type="match status" value="1"/>
</dbReference>
<dbReference type="Pfam" id="PF01330">
    <property type="entry name" value="RuvA_N"/>
    <property type="match status" value="1"/>
</dbReference>
<dbReference type="SMART" id="SM00278">
    <property type="entry name" value="HhH1"/>
    <property type="match status" value="2"/>
</dbReference>
<dbReference type="SUPFAM" id="SSF46929">
    <property type="entry name" value="DNA helicase RuvA subunit, C-terminal domain"/>
    <property type="match status" value="1"/>
</dbReference>
<dbReference type="SUPFAM" id="SSF50249">
    <property type="entry name" value="Nucleic acid-binding proteins"/>
    <property type="match status" value="1"/>
</dbReference>
<dbReference type="SUPFAM" id="SSF47781">
    <property type="entry name" value="RuvA domain 2-like"/>
    <property type="match status" value="1"/>
</dbReference>